<proteinExistence type="inferred from homology"/>
<protein>
    <recommendedName>
        <fullName evidence="1">3-isopropylmalate dehydratase small subunit</fullName>
        <ecNumber evidence="1">4.2.1.33</ecNumber>
    </recommendedName>
    <alternativeName>
        <fullName evidence="1">Alpha-IPM isomerase</fullName>
        <shortName evidence="1">IPMI</shortName>
    </alternativeName>
    <alternativeName>
        <fullName evidence="1">Isopropylmalate isomerase</fullName>
    </alternativeName>
</protein>
<gene>
    <name evidence="1" type="primary">leuD</name>
    <name type="ordered locus">YG5714_0261</name>
</gene>
<name>LEUD_SACI7</name>
<comment type="function">
    <text evidence="1">Catalyzes the isomerization between 2-isopropylmalate and 3-isopropylmalate, via the formation of 2-isopropylmaleate.</text>
</comment>
<comment type="catalytic activity">
    <reaction evidence="1">
        <text>(2R,3S)-3-isopropylmalate = (2S)-2-isopropylmalate</text>
        <dbReference type="Rhea" id="RHEA:32287"/>
        <dbReference type="ChEBI" id="CHEBI:1178"/>
        <dbReference type="ChEBI" id="CHEBI:35121"/>
        <dbReference type="EC" id="4.2.1.33"/>
    </reaction>
</comment>
<comment type="pathway">
    <text evidence="1">Amino-acid biosynthesis; L-leucine biosynthesis; L-leucine from 3-methyl-2-oxobutanoate: step 2/4.</text>
</comment>
<comment type="subunit">
    <text evidence="1">Heterodimer of LeuC and LeuD.</text>
</comment>
<comment type="similarity">
    <text evidence="1">Belongs to the LeuD family. LeuD type 2 subfamily.</text>
</comment>
<sequence>MIIEGPVIKFGDKIDTDIIIPARYLKYTDPQYLAQHVMEPLDPEFYKKASKGVIIVAGKVFGMGSSREQAAIALKAAGVKAVVAESFARIFYRNAINNGLPVITLPNSTKEIDENSYVKIDVETGEILVGNKVLKGKGITGMALEILQAGGIMEYLKKMQTVNRN</sequence>
<evidence type="ECO:0000255" key="1">
    <source>
        <dbReference type="HAMAP-Rule" id="MF_01032"/>
    </source>
</evidence>
<feature type="chain" id="PRO_1000213373" description="3-isopropylmalate dehydratase small subunit">
    <location>
        <begin position="1"/>
        <end position="165"/>
    </location>
</feature>
<reference key="1">
    <citation type="journal article" date="2009" name="Proc. Natl. Acad. Sci. U.S.A.">
        <title>Biogeography of the Sulfolobus islandicus pan-genome.</title>
        <authorList>
            <person name="Reno M.L."/>
            <person name="Held N.L."/>
            <person name="Fields C.J."/>
            <person name="Burke P.V."/>
            <person name="Whitaker R.J."/>
        </authorList>
    </citation>
    <scope>NUCLEOTIDE SEQUENCE [LARGE SCALE GENOMIC DNA]</scope>
    <source>
        <strain>Y.G.57.14 / Yellowstone #1</strain>
    </source>
</reference>
<organism>
    <name type="scientific">Saccharolobus islandicus (strain Y.G.57.14 / Yellowstone #1)</name>
    <name type="common">Sulfolobus islandicus</name>
    <dbReference type="NCBI Taxonomy" id="439386"/>
    <lineage>
        <taxon>Archaea</taxon>
        <taxon>Thermoproteota</taxon>
        <taxon>Thermoprotei</taxon>
        <taxon>Sulfolobales</taxon>
        <taxon>Sulfolobaceae</taxon>
        <taxon>Saccharolobus</taxon>
    </lineage>
</organism>
<dbReference type="EC" id="4.2.1.33" evidence="1"/>
<dbReference type="EMBL" id="CP001403">
    <property type="protein sequence ID" value="ACP44554.1"/>
    <property type="molecule type" value="Genomic_DNA"/>
</dbReference>
<dbReference type="RefSeq" id="WP_010923875.1">
    <property type="nucleotide sequence ID" value="NC_012622.1"/>
</dbReference>
<dbReference type="SMR" id="C3N992"/>
<dbReference type="GeneID" id="7808220"/>
<dbReference type="KEGG" id="siy:YG5714_0261"/>
<dbReference type="HOGENOM" id="CLU_081378_1_1_2"/>
<dbReference type="UniPathway" id="UPA00048">
    <property type="reaction ID" value="UER00071"/>
</dbReference>
<dbReference type="Proteomes" id="UP000002308">
    <property type="component" value="Chromosome"/>
</dbReference>
<dbReference type="GO" id="GO:0003861">
    <property type="term" value="F:3-isopropylmalate dehydratase activity"/>
    <property type="evidence" value="ECO:0007669"/>
    <property type="project" value="UniProtKB-UniRule"/>
</dbReference>
<dbReference type="GO" id="GO:0009098">
    <property type="term" value="P:L-leucine biosynthetic process"/>
    <property type="evidence" value="ECO:0007669"/>
    <property type="project" value="UniProtKB-UniRule"/>
</dbReference>
<dbReference type="CDD" id="cd01577">
    <property type="entry name" value="IPMI_Swivel"/>
    <property type="match status" value="1"/>
</dbReference>
<dbReference type="Gene3D" id="3.20.19.10">
    <property type="entry name" value="Aconitase, domain 4"/>
    <property type="match status" value="1"/>
</dbReference>
<dbReference type="HAMAP" id="MF_01032">
    <property type="entry name" value="LeuD_type2"/>
    <property type="match status" value="1"/>
</dbReference>
<dbReference type="InterPro" id="IPR015928">
    <property type="entry name" value="Aconitase/3IPM_dehydase_swvl"/>
</dbReference>
<dbReference type="InterPro" id="IPR000573">
    <property type="entry name" value="AconitaseA/IPMdHydase_ssu_swvl"/>
</dbReference>
<dbReference type="InterPro" id="IPR033940">
    <property type="entry name" value="IPMI_Swivel"/>
</dbReference>
<dbReference type="InterPro" id="IPR050075">
    <property type="entry name" value="LeuD"/>
</dbReference>
<dbReference type="InterPro" id="IPR011827">
    <property type="entry name" value="LeuD_type2/HacB/DmdB"/>
</dbReference>
<dbReference type="NCBIfam" id="TIGR02087">
    <property type="entry name" value="LEUD_arch"/>
    <property type="match status" value="1"/>
</dbReference>
<dbReference type="PANTHER" id="PTHR43345:SF2">
    <property type="entry name" value="3-ISOPROPYLMALATE DEHYDRATASE SMALL SUBUNIT 1"/>
    <property type="match status" value="1"/>
</dbReference>
<dbReference type="PANTHER" id="PTHR43345">
    <property type="entry name" value="3-ISOPROPYLMALATE DEHYDRATASE SMALL SUBUNIT 2-RELATED-RELATED"/>
    <property type="match status" value="1"/>
</dbReference>
<dbReference type="Pfam" id="PF00694">
    <property type="entry name" value="Aconitase_C"/>
    <property type="match status" value="1"/>
</dbReference>
<dbReference type="SUPFAM" id="SSF52016">
    <property type="entry name" value="LeuD/IlvD-like"/>
    <property type="match status" value="1"/>
</dbReference>
<accession>C3N992</accession>
<keyword id="KW-0028">Amino-acid biosynthesis</keyword>
<keyword id="KW-0100">Branched-chain amino acid biosynthesis</keyword>
<keyword id="KW-0432">Leucine biosynthesis</keyword>
<keyword id="KW-0456">Lyase</keyword>